<evidence type="ECO:0000255" key="1">
    <source>
        <dbReference type="HAMAP-Rule" id="MF_00770"/>
    </source>
</evidence>
<protein>
    <recommendedName>
        <fullName evidence="1">Rhamnulose-1-phosphate aldolase</fullName>
        <ecNumber evidence="1">4.1.2.19</ecNumber>
    </recommendedName>
</protein>
<organism>
    <name type="scientific">Listeria welshimeri serovar 6b (strain ATCC 35897 / DSM 20650 / CCUG 15529 / CIP 8149 / NCTC 11857 / SLCC 5334 / V8)</name>
    <dbReference type="NCBI Taxonomy" id="386043"/>
    <lineage>
        <taxon>Bacteria</taxon>
        <taxon>Bacillati</taxon>
        <taxon>Bacillota</taxon>
        <taxon>Bacilli</taxon>
        <taxon>Bacillales</taxon>
        <taxon>Listeriaceae</taxon>
        <taxon>Listeria</taxon>
    </lineage>
</organism>
<keyword id="KW-0963">Cytoplasm</keyword>
<keyword id="KW-0456">Lyase</keyword>
<keyword id="KW-0479">Metal-binding</keyword>
<keyword id="KW-0684">Rhamnose metabolism</keyword>
<keyword id="KW-0862">Zinc</keyword>
<feature type="chain" id="PRO_1000017341" description="Rhamnulose-1-phosphate aldolase">
    <location>
        <begin position="1"/>
        <end position="278"/>
    </location>
</feature>
<feature type="active site" evidence="1">
    <location>
        <position position="116"/>
    </location>
</feature>
<feature type="binding site" evidence="1">
    <location>
        <position position="139"/>
    </location>
    <ligand>
        <name>Zn(2+)</name>
        <dbReference type="ChEBI" id="CHEBI:29105"/>
    </ligand>
</feature>
<feature type="binding site" evidence="1">
    <location>
        <position position="141"/>
    </location>
    <ligand>
        <name>Zn(2+)</name>
        <dbReference type="ChEBI" id="CHEBI:29105"/>
    </ligand>
</feature>
<feature type="binding site" evidence="1">
    <location>
        <position position="210"/>
    </location>
    <ligand>
        <name>Zn(2+)</name>
        <dbReference type="ChEBI" id="CHEBI:29105"/>
    </ligand>
</feature>
<sequence length="278" mass="30665">MYSIYEAPFMKEMCEMTQNLWRNGWAEKNGGNISQLLEASEIKHYLDTDRYLWTEPLGFDASPLAGNVFLVSGSGKYFKNVQKNPADNLCIIKVSSDGASYHLLWGLENGGRPTSELASHLKCHIVRLSQDPDHRVILHTHATAVSAMTFVHDLDEAKFTRTLWQMITECLVVFPDGVAVVPWMVAGTNELGEASAAKMNDSRIVVWAHHGIMGAGTTMDDAFGLVETVEKAAKIYMQIAHFPTGIKQAITDEELVALAERFNVVPKAGILKEAGGVK</sequence>
<name>RHAD_LISW6</name>
<reference key="1">
    <citation type="journal article" date="2006" name="J. Bacteriol.">
        <title>Whole-genome sequence of Listeria welshimeri reveals common steps in genome reduction with Listeria innocua as compared to Listeria monocytogenes.</title>
        <authorList>
            <person name="Hain T."/>
            <person name="Steinweg C."/>
            <person name="Kuenne C.T."/>
            <person name="Billion A."/>
            <person name="Ghai R."/>
            <person name="Chatterjee S.S."/>
            <person name="Domann E."/>
            <person name="Kaerst U."/>
            <person name="Goesmann A."/>
            <person name="Bekel T."/>
            <person name="Bartels D."/>
            <person name="Kaiser O."/>
            <person name="Meyer F."/>
            <person name="Puehler A."/>
            <person name="Weisshaar B."/>
            <person name="Wehland J."/>
            <person name="Liang C."/>
            <person name="Dandekar T."/>
            <person name="Lampidis R."/>
            <person name="Kreft J."/>
            <person name="Goebel W."/>
            <person name="Chakraborty T."/>
        </authorList>
    </citation>
    <scope>NUCLEOTIDE SEQUENCE [LARGE SCALE GENOMIC DNA]</scope>
    <source>
        <strain>ATCC 35897 / DSM 20650 / CCUG 15529 / CIP 8149 / NCTC 11857 / SLCC 5334 / V8</strain>
    </source>
</reference>
<accession>A0AFI3</accession>
<gene>
    <name evidence="1" type="primary">rhaD</name>
    <name type="ordered locus">lwe0347</name>
</gene>
<comment type="function">
    <text evidence="1">Catalyzes the reversible cleavage of L-rhamnulose-1-phosphate to dihydroxyacetone phosphate (DHAP) and L-lactaldehyde.</text>
</comment>
<comment type="catalytic activity">
    <reaction evidence="1">
        <text>L-rhamnulose 1-phosphate = (S)-lactaldehyde + dihydroxyacetone phosphate</text>
        <dbReference type="Rhea" id="RHEA:19689"/>
        <dbReference type="ChEBI" id="CHEBI:18041"/>
        <dbReference type="ChEBI" id="CHEBI:57642"/>
        <dbReference type="ChEBI" id="CHEBI:58313"/>
        <dbReference type="EC" id="4.1.2.19"/>
    </reaction>
</comment>
<comment type="cofactor">
    <cofactor evidence="1">
        <name>Zn(2+)</name>
        <dbReference type="ChEBI" id="CHEBI:29105"/>
    </cofactor>
    <text evidence="1">Binds 1 zinc ion per subunit.</text>
</comment>
<comment type="pathway">
    <text evidence="1">Carbohydrate degradation; L-rhamnose degradation; glycerone phosphate from L-rhamnose: step 3/3.</text>
</comment>
<comment type="subcellular location">
    <subcellularLocation>
        <location evidence="1">Cytoplasm</location>
    </subcellularLocation>
</comment>
<comment type="similarity">
    <text evidence="1">Belongs to the aldolase class II family. RhaD subfamily.</text>
</comment>
<proteinExistence type="inferred from homology"/>
<dbReference type="EC" id="4.1.2.19" evidence="1"/>
<dbReference type="EMBL" id="AM263198">
    <property type="protein sequence ID" value="CAK19765.1"/>
    <property type="molecule type" value="Genomic_DNA"/>
</dbReference>
<dbReference type="RefSeq" id="WP_011701199.1">
    <property type="nucleotide sequence ID" value="NC_008555.1"/>
</dbReference>
<dbReference type="SMR" id="A0AFI3"/>
<dbReference type="STRING" id="386043.lwe0347"/>
<dbReference type="GeneID" id="61188239"/>
<dbReference type="KEGG" id="lwe:lwe0347"/>
<dbReference type="eggNOG" id="COG0235">
    <property type="taxonomic scope" value="Bacteria"/>
</dbReference>
<dbReference type="HOGENOM" id="CLU_076831_0_0_9"/>
<dbReference type="OrthoDB" id="9784634at2"/>
<dbReference type="UniPathway" id="UPA00541">
    <property type="reaction ID" value="UER00603"/>
</dbReference>
<dbReference type="Proteomes" id="UP000000779">
    <property type="component" value="Chromosome"/>
</dbReference>
<dbReference type="GO" id="GO:0005829">
    <property type="term" value="C:cytosol"/>
    <property type="evidence" value="ECO:0007669"/>
    <property type="project" value="TreeGrafter"/>
</dbReference>
<dbReference type="GO" id="GO:0046872">
    <property type="term" value="F:metal ion binding"/>
    <property type="evidence" value="ECO:0007669"/>
    <property type="project" value="UniProtKB-KW"/>
</dbReference>
<dbReference type="GO" id="GO:0008994">
    <property type="term" value="F:rhamnulose-1-phosphate aldolase activity"/>
    <property type="evidence" value="ECO:0007669"/>
    <property type="project" value="UniProtKB-UniRule"/>
</dbReference>
<dbReference type="GO" id="GO:0019323">
    <property type="term" value="P:pentose catabolic process"/>
    <property type="evidence" value="ECO:0007669"/>
    <property type="project" value="TreeGrafter"/>
</dbReference>
<dbReference type="GO" id="GO:0019301">
    <property type="term" value="P:rhamnose catabolic process"/>
    <property type="evidence" value="ECO:0007669"/>
    <property type="project" value="UniProtKB-UniRule"/>
</dbReference>
<dbReference type="Gene3D" id="3.40.225.10">
    <property type="entry name" value="Class II aldolase/adducin N-terminal domain"/>
    <property type="match status" value="1"/>
</dbReference>
<dbReference type="HAMAP" id="MF_00770">
    <property type="entry name" value="RhaD"/>
    <property type="match status" value="1"/>
</dbReference>
<dbReference type="InterPro" id="IPR050197">
    <property type="entry name" value="Aldolase_class_II_sugar_metab"/>
</dbReference>
<dbReference type="InterPro" id="IPR001303">
    <property type="entry name" value="Aldolase_II/adducin_N"/>
</dbReference>
<dbReference type="InterPro" id="IPR036409">
    <property type="entry name" value="Aldolase_II/adducin_N_sf"/>
</dbReference>
<dbReference type="InterPro" id="IPR013447">
    <property type="entry name" value="Rhamnulose-1-P_Aldolase"/>
</dbReference>
<dbReference type="NCBIfam" id="NF002963">
    <property type="entry name" value="PRK03634.1"/>
    <property type="match status" value="1"/>
</dbReference>
<dbReference type="NCBIfam" id="TIGR02624">
    <property type="entry name" value="rhamnu_1P_ald"/>
    <property type="match status" value="1"/>
</dbReference>
<dbReference type="PANTHER" id="PTHR22789:SF0">
    <property type="entry name" value="3-OXO-TETRONATE 4-PHOSPHATE DECARBOXYLASE-RELATED"/>
    <property type="match status" value="1"/>
</dbReference>
<dbReference type="PANTHER" id="PTHR22789">
    <property type="entry name" value="FUCULOSE PHOSPHATE ALDOLASE"/>
    <property type="match status" value="1"/>
</dbReference>
<dbReference type="Pfam" id="PF00596">
    <property type="entry name" value="Aldolase_II"/>
    <property type="match status" value="1"/>
</dbReference>
<dbReference type="SMART" id="SM01007">
    <property type="entry name" value="Aldolase_II"/>
    <property type="match status" value="1"/>
</dbReference>
<dbReference type="SUPFAM" id="SSF53639">
    <property type="entry name" value="AraD/HMP-PK domain-like"/>
    <property type="match status" value="1"/>
</dbReference>